<name>PYRB_SHISS</name>
<organism>
    <name type="scientific">Shigella sonnei (strain Ss046)</name>
    <dbReference type="NCBI Taxonomy" id="300269"/>
    <lineage>
        <taxon>Bacteria</taxon>
        <taxon>Pseudomonadati</taxon>
        <taxon>Pseudomonadota</taxon>
        <taxon>Gammaproteobacteria</taxon>
        <taxon>Enterobacterales</taxon>
        <taxon>Enterobacteriaceae</taxon>
        <taxon>Shigella</taxon>
    </lineage>
</organism>
<keyword id="KW-0665">Pyrimidine biosynthesis</keyword>
<keyword id="KW-1185">Reference proteome</keyword>
<keyword id="KW-0808">Transferase</keyword>
<gene>
    <name evidence="1" type="primary">pyrB</name>
    <name type="ordered locus">SSON_4426</name>
</gene>
<feature type="chain" id="PRO_0000301621" description="Aspartate carbamoyltransferase catalytic subunit">
    <location>
        <begin position="1"/>
        <end position="311"/>
    </location>
</feature>
<feature type="binding site" evidence="1">
    <location>
        <position position="55"/>
    </location>
    <ligand>
        <name>carbamoyl phosphate</name>
        <dbReference type="ChEBI" id="CHEBI:58228"/>
    </ligand>
</feature>
<feature type="binding site" evidence="1">
    <location>
        <position position="56"/>
    </location>
    <ligand>
        <name>carbamoyl phosphate</name>
        <dbReference type="ChEBI" id="CHEBI:58228"/>
    </ligand>
</feature>
<feature type="binding site" evidence="1">
    <location>
        <position position="85"/>
    </location>
    <ligand>
        <name>L-aspartate</name>
        <dbReference type="ChEBI" id="CHEBI:29991"/>
    </ligand>
</feature>
<feature type="binding site" evidence="1">
    <location>
        <position position="106"/>
    </location>
    <ligand>
        <name>carbamoyl phosphate</name>
        <dbReference type="ChEBI" id="CHEBI:58228"/>
    </ligand>
</feature>
<feature type="binding site" evidence="1">
    <location>
        <position position="135"/>
    </location>
    <ligand>
        <name>carbamoyl phosphate</name>
        <dbReference type="ChEBI" id="CHEBI:58228"/>
    </ligand>
</feature>
<feature type="binding site" evidence="1">
    <location>
        <position position="138"/>
    </location>
    <ligand>
        <name>carbamoyl phosphate</name>
        <dbReference type="ChEBI" id="CHEBI:58228"/>
    </ligand>
</feature>
<feature type="binding site" evidence="1">
    <location>
        <position position="168"/>
    </location>
    <ligand>
        <name>L-aspartate</name>
        <dbReference type="ChEBI" id="CHEBI:29991"/>
    </ligand>
</feature>
<feature type="binding site" evidence="1">
    <location>
        <position position="230"/>
    </location>
    <ligand>
        <name>L-aspartate</name>
        <dbReference type="ChEBI" id="CHEBI:29991"/>
    </ligand>
</feature>
<feature type="binding site" evidence="1">
    <location>
        <position position="268"/>
    </location>
    <ligand>
        <name>carbamoyl phosphate</name>
        <dbReference type="ChEBI" id="CHEBI:58228"/>
    </ligand>
</feature>
<feature type="binding site" evidence="1">
    <location>
        <position position="269"/>
    </location>
    <ligand>
        <name>carbamoyl phosphate</name>
        <dbReference type="ChEBI" id="CHEBI:58228"/>
    </ligand>
</feature>
<comment type="function">
    <text evidence="1">Catalyzes the condensation of carbamoyl phosphate and aspartate to form carbamoyl aspartate and inorganic phosphate, the committed step in the de novo pyrimidine nucleotide biosynthesis pathway.</text>
</comment>
<comment type="catalytic activity">
    <reaction evidence="1">
        <text>carbamoyl phosphate + L-aspartate = N-carbamoyl-L-aspartate + phosphate + H(+)</text>
        <dbReference type="Rhea" id="RHEA:20013"/>
        <dbReference type="ChEBI" id="CHEBI:15378"/>
        <dbReference type="ChEBI" id="CHEBI:29991"/>
        <dbReference type="ChEBI" id="CHEBI:32814"/>
        <dbReference type="ChEBI" id="CHEBI:43474"/>
        <dbReference type="ChEBI" id="CHEBI:58228"/>
        <dbReference type="EC" id="2.1.3.2"/>
    </reaction>
</comment>
<comment type="pathway">
    <text evidence="1">Pyrimidine metabolism; UMP biosynthesis via de novo pathway; (S)-dihydroorotate from bicarbonate: step 2/3.</text>
</comment>
<comment type="subunit">
    <text evidence="1">Heterododecamer (2C3:3R2) of six catalytic PyrB chains organized as two trimers (C3), and six regulatory PyrI chains organized as three dimers (R2).</text>
</comment>
<comment type="similarity">
    <text evidence="1">Belongs to the aspartate/ornithine carbamoyltransferase superfamily. ATCase family.</text>
</comment>
<reference key="1">
    <citation type="journal article" date="2005" name="Nucleic Acids Res.">
        <title>Genome dynamics and diversity of Shigella species, the etiologic agents of bacillary dysentery.</title>
        <authorList>
            <person name="Yang F."/>
            <person name="Yang J."/>
            <person name="Zhang X."/>
            <person name="Chen L."/>
            <person name="Jiang Y."/>
            <person name="Yan Y."/>
            <person name="Tang X."/>
            <person name="Wang J."/>
            <person name="Xiong Z."/>
            <person name="Dong J."/>
            <person name="Xue Y."/>
            <person name="Zhu Y."/>
            <person name="Xu X."/>
            <person name="Sun L."/>
            <person name="Chen S."/>
            <person name="Nie H."/>
            <person name="Peng J."/>
            <person name="Xu J."/>
            <person name="Wang Y."/>
            <person name="Yuan Z."/>
            <person name="Wen Y."/>
            <person name="Yao Z."/>
            <person name="Shen Y."/>
            <person name="Qiang B."/>
            <person name="Hou Y."/>
            <person name="Yu J."/>
            <person name="Jin Q."/>
        </authorList>
    </citation>
    <scope>NUCLEOTIDE SEQUENCE [LARGE SCALE GENOMIC DNA]</scope>
    <source>
        <strain>Ss046</strain>
    </source>
</reference>
<accession>Q3YUA6</accession>
<dbReference type="EC" id="2.1.3.2" evidence="1"/>
<dbReference type="EMBL" id="CP000038">
    <property type="protein sequence ID" value="AAZ90906.1"/>
    <property type="molecule type" value="Genomic_DNA"/>
</dbReference>
<dbReference type="RefSeq" id="WP_000013046.1">
    <property type="nucleotide sequence ID" value="NC_007384.1"/>
</dbReference>
<dbReference type="SMR" id="Q3YUA6"/>
<dbReference type="GeneID" id="93777579"/>
<dbReference type="KEGG" id="ssn:SSON_4426"/>
<dbReference type="HOGENOM" id="CLU_043846_1_2_6"/>
<dbReference type="UniPathway" id="UPA00070">
    <property type="reaction ID" value="UER00116"/>
</dbReference>
<dbReference type="Proteomes" id="UP000002529">
    <property type="component" value="Chromosome"/>
</dbReference>
<dbReference type="GO" id="GO:0005829">
    <property type="term" value="C:cytosol"/>
    <property type="evidence" value="ECO:0007669"/>
    <property type="project" value="TreeGrafter"/>
</dbReference>
<dbReference type="GO" id="GO:0016597">
    <property type="term" value="F:amino acid binding"/>
    <property type="evidence" value="ECO:0007669"/>
    <property type="project" value="InterPro"/>
</dbReference>
<dbReference type="GO" id="GO:0004070">
    <property type="term" value="F:aspartate carbamoyltransferase activity"/>
    <property type="evidence" value="ECO:0007669"/>
    <property type="project" value="UniProtKB-UniRule"/>
</dbReference>
<dbReference type="GO" id="GO:0006207">
    <property type="term" value="P:'de novo' pyrimidine nucleobase biosynthetic process"/>
    <property type="evidence" value="ECO:0007669"/>
    <property type="project" value="InterPro"/>
</dbReference>
<dbReference type="GO" id="GO:0044205">
    <property type="term" value="P:'de novo' UMP biosynthetic process"/>
    <property type="evidence" value="ECO:0007669"/>
    <property type="project" value="UniProtKB-UniRule"/>
</dbReference>
<dbReference type="GO" id="GO:0006520">
    <property type="term" value="P:amino acid metabolic process"/>
    <property type="evidence" value="ECO:0007669"/>
    <property type="project" value="InterPro"/>
</dbReference>
<dbReference type="FunFam" id="3.40.50.1370:FF:000001">
    <property type="entry name" value="Aspartate carbamoyltransferase"/>
    <property type="match status" value="1"/>
</dbReference>
<dbReference type="FunFam" id="3.40.50.1370:FF:000002">
    <property type="entry name" value="Aspartate carbamoyltransferase 2"/>
    <property type="match status" value="1"/>
</dbReference>
<dbReference type="Gene3D" id="3.40.50.1370">
    <property type="entry name" value="Aspartate/ornithine carbamoyltransferase"/>
    <property type="match status" value="2"/>
</dbReference>
<dbReference type="HAMAP" id="MF_00001">
    <property type="entry name" value="Asp_carb_tr"/>
    <property type="match status" value="1"/>
</dbReference>
<dbReference type="InterPro" id="IPR006132">
    <property type="entry name" value="Asp/Orn_carbamoyltranf_P-bd"/>
</dbReference>
<dbReference type="InterPro" id="IPR006130">
    <property type="entry name" value="Asp/Orn_carbamoylTrfase"/>
</dbReference>
<dbReference type="InterPro" id="IPR036901">
    <property type="entry name" value="Asp/Orn_carbamoylTrfase_sf"/>
</dbReference>
<dbReference type="InterPro" id="IPR002082">
    <property type="entry name" value="Asp_carbamoyltransf"/>
</dbReference>
<dbReference type="InterPro" id="IPR006131">
    <property type="entry name" value="Asp_carbamoyltransf_Asp/Orn-bd"/>
</dbReference>
<dbReference type="NCBIfam" id="TIGR00670">
    <property type="entry name" value="asp_carb_tr"/>
    <property type="match status" value="1"/>
</dbReference>
<dbReference type="NCBIfam" id="NF002032">
    <property type="entry name" value="PRK00856.1"/>
    <property type="match status" value="1"/>
</dbReference>
<dbReference type="PANTHER" id="PTHR45753:SF6">
    <property type="entry name" value="ASPARTATE CARBAMOYLTRANSFERASE"/>
    <property type="match status" value="1"/>
</dbReference>
<dbReference type="PANTHER" id="PTHR45753">
    <property type="entry name" value="ORNITHINE CARBAMOYLTRANSFERASE, MITOCHONDRIAL"/>
    <property type="match status" value="1"/>
</dbReference>
<dbReference type="Pfam" id="PF00185">
    <property type="entry name" value="OTCace"/>
    <property type="match status" value="1"/>
</dbReference>
<dbReference type="Pfam" id="PF02729">
    <property type="entry name" value="OTCace_N"/>
    <property type="match status" value="1"/>
</dbReference>
<dbReference type="PRINTS" id="PR00100">
    <property type="entry name" value="AOTCASE"/>
</dbReference>
<dbReference type="PRINTS" id="PR00101">
    <property type="entry name" value="ATCASE"/>
</dbReference>
<dbReference type="SUPFAM" id="SSF53671">
    <property type="entry name" value="Aspartate/ornithine carbamoyltransferase"/>
    <property type="match status" value="1"/>
</dbReference>
<dbReference type="PROSITE" id="PS00097">
    <property type="entry name" value="CARBAMOYLTRANSFERASE"/>
    <property type="match status" value="1"/>
</dbReference>
<proteinExistence type="inferred from homology"/>
<sequence length="311" mass="34427">MANPLYQKHIISINDLSRDDLNLVLATAAKLKANPQPELLKHKVIASCFFEASTRTRLSFETSMHRLGASVVGFSDSANTSLGKKGETLADTISVISTYVDAIVMRHPQEGAARLATEFSGNVPVLNAGDGSNQHPTQTLLDLFTIQETQGRLDNLHVAMVGDLKYGRTVHSLTQALAKFDGNRFYFIAPDALAMPQYILDMLDEKGIAWSLHSSIEEVMAEVDILYMTRVQKERLDPSEYANVKAQFVLRASDLHNAKANMKVLHPLPRVDEIATDVDKTPHAWYFQQAGNGIFARQALLALVLNRDLVL</sequence>
<protein>
    <recommendedName>
        <fullName evidence="1">Aspartate carbamoyltransferase catalytic subunit</fullName>
        <ecNumber evidence="1">2.1.3.2</ecNumber>
    </recommendedName>
    <alternativeName>
        <fullName evidence="1">Aspartate transcarbamylase</fullName>
        <shortName evidence="1">ATCase</shortName>
    </alternativeName>
</protein>
<evidence type="ECO:0000255" key="1">
    <source>
        <dbReference type="HAMAP-Rule" id="MF_00001"/>
    </source>
</evidence>